<feature type="chain" id="PRO_0000424189" description="N,N'-diacetyllegionaminic acid synthase">
    <location>
        <begin position="1"/>
        <end position="334"/>
    </location>
</feature>
<feature type="domain" description="AFP-like" evidence="1">
    <location>
        <begin position="282"/>
        <end position="334"/>
    </location>
</feature>
<protein>
    <recommendedName>
        <fullName>N,N'-diacetyllegionaminic acid synthase</fullName>
        <ecNumber>2.5.1.101</ecNumber>
    </recommendedName>
</protein>
<accession>Q0P8T1</accession>
<name>NEUBH_CAMJE</name>
<reference key="1">
    <citation type="journal article" date="2000" name="Nature">
        <title>The genome sequence of the food-borne pathogen Campylobacter jejuni reveals hypervariable sequences.</title>
        <authorList>
            <person name="Parkhill J."/>
            <person name="Wren B.W."/>
            <person name="Mungall K.L."/>
            <person name="Ketley J.M."/>
            <person name="Churcher C.M."/>
            <person name="Basham D."/>
            <person name="Chillingworth T."/>
            <person name="Davies R.M."/>
            <person name="Feltwell T."/>
            <person name="Holroyd S."/>
            <person name="Jagels K."/>
            <person name="Karlyshev A.V."/>
            <person name="Moule S."/>
            <person name="Pallen M.J."/>
            <person name="Penn C.W."/>
            <person name="Quail M.A."/>
            <person name="Rajandream M.A."/>
            <person name="Rutherford K.M."/>
            <person name="van Vliet A.H.M."/>
            <person name="Whitehead S."/>
            <person name="Barrell B.G."/>
        </authorList>
    </citation>
    <scope>NUCLEOTIDE SEQUENCE [LARGE SCALE GENOMIC DNA]</scope>
    <source>
        <strain>ATCC 700819 / NCTC 11168</strain>
    </source>
</reference>
<reference key="2">
    <citation type="journal article" date="2009" name="Glycobiology">
        <title>The CMP-legionaminic acid pathway in Campylobacter: biosynthesis involving novel GDP-linked precursors.</title>
        <authorList>
            <person name="Schoenhofen I.C."/>
            <person name="Vinogradov E."/>
            <person name="Whitfield D.M."/>
            <person name="Brisson J.R."/>
            <person name="Logan S.M."/>
        </authorList>
    </citation>
    <scope>FUNCTION</scope>
    <scope>CATALYTIC ACTIVITY</scope>
    <scope>NOMENCLATURE</scope>
    <source>
        <strain>ATCC 700819 / NCTC 11168</strain>
    </source>
</reference>
<proteinExistence type="evidence at protein level"/>
<organism>
    <name type="scientific">Campylobacter jejuni subsp. jejuni serotype O:2 (strain ATCC 700819 / NCTC 11168)</name>
    <dbReference type="NCBI Taxonomy" id="192222"/>
    <lineage>
        <taxon>Bacteria</taxon>
        <taxon>Pseudomonadati</taxon>
        <taxon>Campylobacterota</taxon>
        <taxon>Epsilonproteobacteria</taxon>
        <taxon>Campylobacterales</taxon>
        <taxon>Campylobacteraceae</taxon>
        <taxon>Campylobacter</taxon>
    </lineage>
</organism>
<dbReference type="EC" id="2.5.1.101"/>
<dbReference type="EMBL" id="AL111168">
    <property type="protein sequence ID" value="CAL35440.1"/>
    <property type="molecule type" value="Genomic_DNA"/>
</dbReference>
<dbReference type="PIR" id="D81276">
    <property type="entry name" value="D81276"/>
</dbReference>
<dbReference type="RefSeq" id="WP_002864265.1">
    <property type="nucleotide sequence ID" value="NZ_SZUC01000001.1"/>
</dbReference>
<dbReference type="RefSeq" id="YP_002344716.1">
    <property type="nucleotide sequence ID" value="NC_002163.1"/>
</dbReference>
<dbReference type="SMR" id="Q0P8T1"/>
<dbReference type="IntAct" id="Q0P8T1">
    <property type="interactions" value="4"/>
</dbReference>
<dbReference type="STRING" id="192222.Cj1327"/>
<dbReference type="PaxDb" id="192222-Cj1327"/>
<dbReference type="EnsemblBacteria" id="CAL35440">
    <property type="protein sequence ID" value="CAL35440"/>
    <property type="gene ID" value="Cj1327"/>
</dbReference>
<dbReference type="GeneID" id="905619"/>
<dbReference type="KEGG" id="cje:Cj1327"/>
<dbReference type="PATRIC" id="fig|192222.6.peg.1309"/>
<dbReference type="eggNOG" id="COG2089">
    <property type="taxonomic scope" value="Bacteria"/>
</dbReference>
<dbReference type="HOGENOM" id="CLU_040465_0_0_7"/>
<dbReference type="OrthoDB" id="9781701at2"/>
<dbReference type="BioCyc" id="MetaCyc:MONOMER-16353"/>
<dbReference type="Proteomes" id="UP000000799">
    <property type="component" value="Chromosome"/>
</dbReference>
<dbReference type="GO" id="GO:0016829">
    <property type="term" value="F:lyase activity"/>
    <property type="evidence" value="ECO:0007669"/>
    <property type="project" value="UniProtKB-KW"/>
</dbReference>
<dbReference type="GO" id="GO:0047444">
    <property type="term" value="F:N-acylneuraminate-9-phosphate synthase activity"/>
    <property type="evidence" value="ECO:0007669"/>
    <property type="project" value="TreeGrafter"/>
</dbReference>
<dbReference type="GO" id="GO:0016765">
    <property type="term" value="F:transferase activity, transferring alkyl or aryl (other than methyl) groups"/>
    <property type="evidence" value="ECO:0000314"/>
    <property type="project" value="UniProtKB"/>
</dbReference>
<dbReference type="GO" id="GO:0044781">
    <property type="term" value="P:bacterial-type flagellum organization"/>
    <property type="evidence" value="ECO:0007669"/>
    <property type="project" value="UniProtKB-KW"/>
</dbReference>
<dbReference type="GO" id="GO:0016051">
    <property type="term" value="P:carbohydrate biosynthetic process"/>
    <property type="evidence" value="ECO:0000314"/>
    <property type="project" value="UniProtKB"/>
</dbReference>
<dbReference type="GO" id="GO:0070085">
    <property type="term" value="P:glycosylation"/>
    <property type="evidence" value="ECO:0007669"/>
    <property type="project" value="TreeGrafter"/>
</dbReference>
<dbReference type="CDD" id="cd11615">
    <property type="entry name" value="SAF_NeuB_like"/>
    <property type="match status" value="1"/>
</dbReference>
<dbReference type="Gene3D" id="3.20.20.70">
    <property type="entry name" value="Aldolase class I"/>
    <property type="match status" value="1"/>
</dbReference>
<dbReference type="Gene3D" id="3.90.1210.10">
    <property type="entry name" value="Antifreeze-like/N-acetylneuraminic acid synthase C-terminal domain"/>
    <property type="match status" value="1"/>
</dbReference>
<dbReference type="InterPro" id="IPR006190">
    <property type="entry name" value="AFP_Neu5c_C"/>
</dbReference>
<dbReference type="InterPro" id="IPR036732">
    <property type="entry name" value="AFP_Neu5c_C_sf"/>
</dbReference>
<dbReference type="InterPro" id="IPR013785">
    <property type="entry name" value="Aldolase_TIM"/>
</dbReference>
<dbReference type="InterPro" id="IPR020007">
    <property type="entry name" value="N-AcNeuraminate_synthase"/>
</dbReference>
<dbReference type="InterPro" id="IPR013132">
    <property type="entry name" value="Neu5Ac_N"/>
</dbReference>
<dbReference type="InterPro" id="IPR051690">
    <property type="entry name" value="Nonulosonic_Acid_Synth"/>
</dbReference>
<dbReference type="InterPro" id="IPR013974">
    <property type="entry name" value="SAF"/>
</dbReference>
<dbReference type="NCBIfam" id="TIGR03569">
    <property type="entry name" value="NeuB_NnaB"/>
    <property type="match status" value="1"/>
</dbReference>
<dbReference type="PANTHER" id="PTHR42966">
    <property type="entry name" value="N-ACETYLNEURAMINATE SYNTHASE"/>
    <property type="match status" value="1"/>
</dbReference>
<dbReference type="PANTHER" id="PTHR42966:SF1">
    <property type="entry name" value="SIALIC ACID SYNTHASE"/>
    <property type="match status" value="1"/>
</dbReference>
<dbReference type="Pfam" id="PF03102">
    <property type="entry name" value="NeuB"/>
    <property type="match status" value="1"/>
</dbReference>
<dbReference type="Pfam" id="PF08666">
    <property type="entry name" value="SAF"/>
    <property type="match status" value="1"/>
</dbReference>
<dbReference type="SMART" id="SM00858">
    <property type="entry name" value="SAF"/>
    <property type="match status" value="1"/>
</dbReference>
<dbReference type="SUPFAM" id="SSF51269">
    <property type="entry name" value="AFP III-like domain"/>
    <property type="match status" value="1"/>
</dbReference>
<dbReference type="SUPFAM" id="SSF51569">
    <property type="entry name" value="Aldolase"/>
    <property type="match status" value="1"/>
</dbReference>
<dbReference type="PROSITE" id="PS50844">
    <property type="entry name" value="AFP_LIKE"/>
    <property type="match status" value="1"/>
</dbReference>
<gene>
    <name type="primary">legI</name>
    <name type="synonym">neuB2</name>
    <name type="ordered locus">Cj1327</name>
</gene>
<comment type="function">
    <text evidence="2">Involved in biosynthesis of legionaminic acid (5,7-diamino-3,5,7,9-tetradeoxy-D-glycero-D-galacto-non-2-ulosonic acid)(Leg), a sialic acid-like derivative that is incorporated into flagellin via O-linkage to Ser/Thr. Catalyzes the condensation of 2,4-diacetamido-2,4,6-trideoxymannose with phosphoenolpyruvate (PEP) to give N,N'-diacetyllegionaminic acid.</text>
</comment>
<comment type="catalytic activity">
    <reaction evidence="2">
        <text>2,4-diacetamido-2,4,6-trideoxy-alpha-D-mannopyranose + phosphoenolpyruvate + H2O = N,N-diacetyllegionaminate + phosphate</text>
        <dbReference type="Rhea" id="RHEA:34507"/>
        <dbReference type="ChEBI" id="CHEBI:15377"/>
        <dbReference type="ChEBI" id="CHEBI:43474"/>
        <dbReference type="ChEBI" id="CHEBI:58702"/>
        <dbReference type="ChEBI" id="CHEBI:68645"/>
        <dbReference type="ChEBI" id="CHEBI:68669"/>
        <dbReference type="EC" id="2.5.1.101"/>
    </reaction>
</comment>
<keyword id="KW-1005">Bacterial flagellum biogenesis</keyword>
<keyword id="KW-0456">Lyase</keyword>
<keyword id="KW-1185">Reference proteome</keyword>
<keyword id="KW-0808">Transferase</keyword>
<sequence length="334" mass="37091">MKKTLIIAEAGVNHNGDLNLAKKLIEIAADSGADFVKFQSFKAKNCISTKAKKAPYQLKTTANDESQLQMVQKLELDLKAHKELILHAKKCNIAFLSTPFDLESVDLLNELGLKIFKIPSGEITNLPYLKKIAKLNKKIILSTGMANLGEIEEALNVLCKNGAKRQNITLLHCTTEYPAPFNEVNLKAMQSLKDAFKLDVGYSDHTRGIHISLAAVALGACVIEKHFTLDKNMSGPDHKASLEPQELKMLCTQIRQIQKAMGDGIKKASKSEQKNINIVRKSLVAKKDIKKGEIFSEGNLTTKRPANGISAMRYEEFLGKIATKNYKEDELIRE</sequence>
<evidence type="ECO:0000255" key="1">
    <source>
        <dbReference type="PROSITE-ProRule" id="PRU00021"/>
    </source>
</evidence>
<evidence type="ECO:0000269" key="2">
    <source>
    </source>
</evidence>